<keyword id="KW-0002">3D-structure</keyword>
<keyword id="KW-0106">Calcium</keyword>
<keyword id="KW-0903">Direct protein sequencing</keyword>
<keyword id="KW-1015">Disulfide bond</keyword>
<keyword id="KW-1206">Fibrinogenolytic toxin</keyword>
<keyword id="KW-1205">Fibrinolytic toxin</keyword>
<keyword id="KW-1199">Hemostasis impairing toxin</keyword>
<keyword id="KW-0378">Hydrolase</keyword>
<keyword id="KW-0479">Metal-binding</keyword>
<keyword id="KW-0482">Metalloprotease</keyword>
<keyword id="KW-0645">Protease</keyword>
<keyword id="KW-0964">Secreted</keyword>
<keyword id="KW-0800">Toxin</keyword>
<keyword id="KW-0862">Zinc</keyword>
<sequence>EQQKFSPRYIELVVVADHGMFKKYNSNLNTIRKWVHEMVNSMNGFYRSVDVTASLANLEVWSKKDLINVQKDSRETLKSFGEWRERDLLPRISHDNAQLLTAIVFDGHTIGRAYTGGMCDPRHSVGVVMDHSPKNLQVAVTMAHELGHNLGMHHDGNQCHCDAASCIMADSLSVVLSYEFSDCSQNQYQTYLTKHNPQCILNEPL</sequence>
<organism>
    <name type="scientific">Bothrops moojeni</name>
    <name type="common">Lance-headed viper</name>
    <name type="synonym">Caissaca</name>
    <dbReference type="NCBI Taxonomy" id="98334"/>
    <lineage>
        <taxon>Eukaryota</taxon>
        <taxon>Metazoa</taxon>
        <taxon>Chordata</taxon>
        <taxon>Craniata</taxon>
        <taxon>Vertebrata</taxon>
        <taxon>Euteleostomi</taxon>
        <taxon>Lepidosauria</taxon>
        <taxon>Squamata</taxon>
        <taxon>Bifurcata</taxon>
        <taxon>Unidentata</taxon>
        <taxon>Episquamata</taxon>
        <taxon>Toxicofera</taxon>
        <taxon>Serpentes</taxon>
        <taxon>Colubroidea</taxon>
        <taxon>Viperidae</taxon>
        <taxon>Crotalinae</taxon>
        <taxon>Bothrops</taxon>
    </lineage>
</organism>
<evidence type="ECO:0000250" key="1">
    <source>
        <dbReference type="UniProtKB" id="P83512"/>
    </source>
</evidence>
<evidence type="ECO:0000255" key="2">
    <source>
        <dbReference type="PROSITE-ProRule" id="PRU00276"/>
    </source>
</evidence>
<evidence type="ECO:0000255" key="3">
    <source>
        <dbReference type="PROSITE-ProRule" id="PRU10095"/>
    </source>
</evidence>
<evidence type="ECO:0000269" key="4">
    <source>
    </source>
</evidence>
<evidence type="ECO:0000269" key="5">
    <source>
    </source>
</evidence>
<evidence type="ECO:0000303" key="6">
    <source>
    </source>
</evidence>
<evidence type="ECO:0000303" key="7">
    <source>
    </source>
</evidence>
<evidence type="ECO:0000305" key="8"/>
<evidence type="ECO:0000305" key="9">
    <source>
    </source>
</evidence>
<evidence type="ECO:0000312" key="10">
    <source>
        <dbReference type="PDB" id="3GBO"/>
    </source>
</evidence>
<evidence type="ECO:0007744" key="11">
    <source>
        <dbReference type="PDB" id="3GBO"/>
    </source>
</evidence>
<evidence type="ECO:0007829" key="12">
    <source>
        <dbReference type="PDB" id="3GBO"/>
    </source>
</evidence>
<proteinExistence type="evidence at protein level"/>
<dbReference type="EC" id="3.4.24.-"/>
<dbReference type="PDB" id="3GBO">
    <property type="method" value="X-ray"/>
    <property type="resolution" value="1.77 A"/>
    <property type="chains" value="A=5-204"/>
</dbReference>
<dbReference type="PDBsum" id="3GBO"/>
<dbReference type="SMR" id="P85314"/>
<dbReference type="MEROPS" id="M12.338"/>
<dbReference type="EvolutionaryTrace" id="P85314"/>
<dbReference type="GO" id="GO:0005576">
    <property type="term" value="C:extracellular region"/>
    <property type="evidence" value="ECO:0007669"/>
    <property type="project" value="UniProtKB-SubCell"/>
</dbReference>
<dbReference type="GO" id="GO:0005886">
    <property type="term" value="C:plasma membrane"/>
    <property type="evidence" value="ECO:0007669"/>
    <property type="project" value="TreeGrafter"/>
</dbReference>
<dbReference type="GO" id="GO:0046872">
    <property type="term" value="F:metal ion binding"/>
    <property type="evidence" value="ECO:0007669"/>
    <property type="project" value="UniProtKB-KW"/>
</dbReference>
<dbReference type="GO" id="GO:0004222">
    <property type="term" value="F:metalloendopeptidase activity"/>
    <property type="evidence" value="ECO:0007669"/>
    <property type="project" value="InterPro"/>
</dbReference>
<dbReference type="GO" id="GO:0090729">
    <property type="term" value="F:toxin activity"/>
    <property type="evidence" value="ECO:0007669"/>
    <property type="project" value="UniProtKB-KW"/>
</dbReference>
<dbReference type="GO" id="GO:0006508">
    <property type="term" value="P:proteolysis"/>
    <property type="evidence" value="ECO:0007669"/>
    <property type="project" value="UniProtKB-KW"/>
</dbReference>
<dbReference type="CDD" id="cd04269">
    <property type="entry name" value="ZnMc_adamalysin_II_like"/>
    <property type="match status" value="1"/>
</dbReference>
<dbReference type="FunFam" id="3.40.390.10:FF:000002">
    <property type="entry name" value="Disintegrin and metalloproteinase domain-containing protein 22"/>
    <property type="match status" value="1"/>
</dbReference>
<dbReference type="Gene3D" id="3.40.390.10">
    <property type="entry name" value="Collagenase (Catalytic Domain)"/>
    <property type="match status" value="1"/>
</dbReference>
<dbReference type="InterPro" id="IPR024079">
    <property type="entry name" value="MetalloPept_cat_dom_sf"/>
</dbReference>
<dbReference type="InterPro" id="IPR001590">
    <property type="entry name" value="Peptidase_M12B"/>
</dbReference>
<dbReference type="InterPro" id="IPR034027">
    <property type="entry name" value="Reprolysin_adamalysin"/>
</dbReference>
<dbReference type="PANTHER" id="PTHR11905">
    <property type="entry name" value="ADAM A DISINTEGRIN AND METALLOPROTEASE DOMAIN"/>
    <property type="match status" value="1"/>
</dbReference>
<dbReference type="PANTHER" id="PTHR11905:SF32">
    <property type="entry name" value="DISINTEGRIN AND METALLOPROTEINASE DOMAIN-CONTAINING PROTEIN 28"/>
    <property type="match status" value="1"/>
</dbReference>
<dbReference type="Pfam" id="PF01421">
    <property type="entry name" value="Reprolysin"/>
    <property type="match status" value="1"/>
</dbReference>
<dbReference type="SUPFAM" id="SSF55486">
    <property type="entry name" value="Metalloproteases ('zincins'), catalytic domain"/>
    <property type="match status" value="1"/>
</dbReference>
<dbReference type="PROSITE" id="PS50215">
    <property type="entry name" value="ADAM_MEPRO"/>
    <property type="match status" value="1"/>
</dbReference>
<dbReference type="PROSITE" id="PS00142">
    <property type="entry name" value="ZINC_PROTEASE"/>
    <property type="match status" value="1"/>
</dbReference>
<accession>P85314</accession>
<comment type="function">
    <text evidence="4">Snake venom zinc metalloproteinase that cleaves the alpha chain of fibrinogen (FGA) first followed by the beta chain (FGB) and shows no effect on the gamma chain. Cleaves only the beta chain of fibrin, leaving the gamma-dimer untouched. Shows proteolytic activity towards azocasein. Causes defibrinogenation when intraperitoneally administered on mice.</text>
</comment>
<comment type="cofactor">
    <cofactor evidence="1">
        <name>Zn(2+)</name>
        <dbReference type="ChEBI" id="CHEBI:29105"/>
    </cofactor>
    <text evidence="1">Binds 1 zinc ion per subunit.</text>
</comment>
<comment type="activity regulation">
    <text evidence="4">Inhibited by EDTA. Not inhibited by the serine proteinase inhibitors aprotinin and benzamidine.</text>
</comment>
<comment type="biophysicochemical properties">
    <phDependence>
        <text evidence="4">Optimum pH is 8.0.</text>
    </phDependence>
</comment>
<comment type="subunit">
    <text evidence="5">Monomer.</text>
</comment>
<comment type="subcellular location">
    <subcellularLocation>
        <location evidence="4">Secreted</location>
    </subcellularLocation>
</comment>
<comment type="tissue specificity">
    <text evidence="9">Expressed by the venom gland.</text>
</comment>
<comment type="mass spectrometry"/>
<comment type="miscellaneous">
    <text evidence="9">Negative results: is devoid of hemorrhagic, thrombin-like, and phospholipase A2 activities. Has no hemorrhagic activity in mice (PubMed:18187176).</text>
</comment>
<comment type="similarity">
    <text evidence="8">Belongs to the venom metalloproteinase (M12B) family. P-I subfamily.</text>
</comment>
<feature type="chain" id="PRO_0000312772" description="Snake venom metalloproteinase BmooMPalpha-I">
    <location>
        <begin position="1"/>
        <end position="205"/>
    </location>
</feature>
<feature type="domain" description="Peptidase M12B" evidence="2">
    <location>
        <begin position="8"/>
        <end position="204"/>
    </location>
</feature>
<feature type="active site" evidence="1 2 3">
    <location>
        <position position="145"/>
    </location>
</feature>
<feature type="binding site" evidence="5 11">
    <location>
        <position position="11"/>
    </location>
    <ligand>
        <name>Ca(2+)</name>
        <dbReference type="ChEBI" id="CHEBI:29108"/>
    </ligand>
</feature>
<feature type="binding site" evidence="5 11">
    <location>
        <position position="95"/>
    </location>
    <ligand>
        <name>Ca(2+)</name>
        <dbReference type="ChEBI" id="CHEBI:29108"/>
    </ligand>
</feature>
<feature type="binding site" evidence="5 11">
    <location>
        <position position="144"/>
    </location>
    <ligand>
        <name>Zn(2+)</name>
        <dbReference type="ChEBI" id="CHEBI:29105"/>
        <note>catalytic</note>
    </ligand>
</feature>
<feature type="binding site" evidence="5 11">
    <location>
        <position position="148"/>
    </location>
    <ligand>
        <name>Zn(2+)</name>
        <dbReference type="ChEBI" id="CHEBI:29105"/>
        <note>catalytic</note>
    </ligand>
</feature>
<feature type="binding site" evidence="5 11">
    <location>
        <position position="154"/>
    </location>
    <ligand>
        <name>Zn(2+)</name>
        <dbReference type="ChEBI" id="CHEBI:29105"/>
        <note>catalytic</note>
    </ligand>
</feature>
<feature type="binding site" evidence="5 11">
    <location>
        <position position="199"/>
    </location>
    <ligand>
        <name>Ca(2+)</name>
        <dbReference type="ChEBI" id="CHEBI:29108"/>
    </ligand>
</feature>
<feature type="binding site" evidence="5 11">
    <location>
        <position position="202"/>
    </location>
    <ligand>
        <name>Ca(2+)</name>
        <dbReference type="ChEBI" id="CHEBI:29108"/>
    </ligand>
</feature>
<feature type="disulfide bond" evidence="5 11">
    <location>
        <begin position="119"/>
        <end position="199"/>
    </location>
</feature>
<feature type="disulfide bond" evidence="5 11">
    <location>
        <begin position="159"/>
        <end position="183"/>
    </location>
</feature>
<feature type="disulfide bond" evidence="5 11">
    <location>
        <begin position="161"/>
        <end position="166"/>
    </location>
</feature>
<feature type="strand" evidence="12">
    <location>
        <begin position="8"/>
        <end position="16"/>
    </location>
</feature>
<feature type="helix" evidence="12">
    <location>
        <begin position="18"/>
        <end position="23"/>
    </location>
</feature>
<feature type="turn" evidence="12">
    <location>
        <begin position="24"/>
        <end position="26"/>
    </location>
</feature>
<feature type="helix" evidence="12">
    <location>
        <begin position="28"/>
        <end position="46"/>
    </location>
</feature>
<feature type="helix" evidence="12">
    <location>
        <begin position="47"/>
        <end position="49"/>
    </location>
</feature>
<feature type="strand" evidence="12">
    <location>
        <begin position="51"/>
        <end position="60"/>
    </location>
</feature>
<feature type="helix" evidence="12">
    <location>
        <begin position="73"/>
        <end position="86"/>
    </location>
</feature>
<feature type="helix" evidence="12">
    <location>
        <begin position="88"/>
        <end position="91"/>
    </location>
</feature>
<feature type="strand" evidence="12">
    <location>
        <begin position="95"/>
        <end position="102"/>
    </location>
</feature>
<feature type="helix" evidence="12">
    <location>
        <begin position="106"/>
        <end position="108"/>
    </location>
</feature>
<feature type="strand" evidence="12">
    <location>
        <begin position="111"/>
        <end position="113"/>
    </location>
</feature>
<feature type="turn" evidence="12">
    <location>
        <begin position="121"/>
        <end position="123"/>
    </location>
</feature>
<feature type="strand" evidence="12">
    <location>
        <begin position="124"/>
        <end position="129"/>
    </location>
</feature>
<feature type="helix" evidence="12">
    <location>
        <begin position="135"/>
        <end position="149"/>
    </location>
</feature>
<feature type="strand" evidence="12">
    <location>
        <begin position="162"/>
        <end position="166"/>
    </location>
</feature>
<feature type="helix" evidence="12">
    <location>
        <begin position="182"/>
        <end position="195"/>
    </location>
</feature>
<reference key="1">
    <citation type="journal article" date="2008" name="Toxicon">
        <title>Isolation and structural characterization of a new fibrin(ogen)olytic metalloproteinase from Bothrops moojeni snake venom.</title>
        <authorList>
            <person name="Bernardes C.P."/>
            <person name="Santos-Filho N.A."/>
            <person name="Costa T.R."/>
            <person name="Gomes M.S.R."/>
            <person name="Torres F.S."/>
            <person name="Costa J."/>
            <person name="Borges M.H."/>
            <person name="Richardson M."/>
            <person name="dos Santos D.M."/>
            <person name="de Castro Pimenta A.M."/>
            <person name="Homsi-Brandeburgo M.I."/>
            <person name="Soares A.M."/>
            <person name="de Oliveira F."/>
        </authorList>
    </citation>
    <scope>NUCLEOTIDE SEQUENCE [MRNA]</scope>
    <scope>PROTEIN SEQUENCE OF 5-63; 81-172 AND 195-204</scope>
    <scope>FUNCTION</scope>
    <scope>ACTIVITY REGULATION</scope>
    <scope>BIOPHYSICOCHEMICAL PROPERTIES</scope>
    <scope>SUBCELLULAR LOCATION</scope>
    <scope>MASS SPECTROMETRY</scope>
    <source>
        <tissue>Venom</tissue>
        <tissue>Venom gland</tissue>
    </source>
</reference>
<reference evidence="10" key="2">
    <citation type="journal article" date="2010" name="Toxicon">
        <title>Structural studies of BmooMPalpha-I, a non-hemorrhagic metalloproteinase from Bothrops moojeni venom.</title>
        <authorList>
            <person name="Akao P.K."/>
            <person name="Tonoli C.C."/>
            <person name="Navarro M.S."/>
            <person name="Cintra A.C."/>
            <person name="Neto J.R."/>
            <person name="Arni R.K."/>
            <person name="Murakami M.T."/>
        </authorList>
    </citation>
    <scope>X-RAY CRYSTALLOGRAPHY (1.76 ANGSTROMS) OF 5-204 IN COMPLEX WITH ZINC ION AND CALCIUM ION</scope>
    <scope>IDENTIFICATION BY MASS SPECTROMETRY</scope>
    <scope>SUBUNIT</scope>
    <scope>METAL BINDING</scope>
    <scope>DISULFIDE BONDS</scope>
</reference>
<name>VM1BI_BOTMO</name>
<protein>
    <recommendedName>
        <fullName evidence="6 7">Snake venom metalloproteinase BmooMPalpha-I</fullName>
        <shortName evidence="6 7">SVMP</shortName>
        <ecNumber>3.4.24.-</ecNumber>
    </recommendedName>
</protein>